<feature type="chain" id="PRO_0000286362" description="DNA topoisomerase 3">
    <location>
        <begin position="1"/>
        <end position="729"/>
    </location>
</feature>
<feature type="domain" description="Toprim" evidence="1">
    <location>
        <begin position="3"/>
        <end position="136"/>
    </location>
</feature>
<feature type="domain" description="Topo IA-type catalytic" evidence="2">
    <location>
        <begin position="153"/>
        <end position="594"/>
    </location>
</feature>
<feature type="region of interest" description="Interaction with DNA" evidence="1">
    <location>
        <begin position="187"/>
        <end position="192"/>
    </location>
</feature>
<feature type="region of interest" description="Disordered" evidence="3">
    <location>
        <begin position="686"/>
        <end position="718"/>
    </location>
</feature>
<feature type="compositionally biased region" description="Basic and acidic residues" evidence="3">
    <location>
        <begin position="686"/>
        <end position="713"/>
    </location>
</feature>
<feature type="active site" description="O-(5'-phospho-DNA)-tyrosine intermediate" evidence="2">
    <location>
        <position position="310"/>
    </location>
</feature>
<feature type="binding site" evidence="1">
    <location>
        <position position="9"/>
    </location>
    <ligand>
        <name>Mg(2+)</name>
        <dbReference type="ChEBI" id="CHEBI:18420"/>
        <note>catalytic</note>
    </ligand>
</feature>
<feature type="binding site" evidence="1">
    <location>
        <position position="105"/>
    </location>
    <ligand>
        <name>Mg(2+)</name>
        <dbReference type="ChEBI" id="CHEBI:18420"/>
        <note>catalytic</note>
    </ligand>
</feature>
<feature type="site" description="Interaction with DNA" evidence="1">
    <location>
        <position position="61"/>
    </location>
</feature>
<feature type="site" description="Interaction with DNA" evidence="1">
    <location>
        <position position="168"/>
    </location>
</feature>
<feature type="site" description="Interaction with DNA" evidence="1">
    <location>
        <position position="176"/>
    </location>
</feature>
<feature type="site" description="Interaction with DNA" evidence="1">
    <location>
        <position position="312"/>
    </location>
</feature>
<organism>
    <name type="scientific">Bacillus cereus (strain ZK / E33L)</name>
    <dbReference type="NCBI Taxonomy" id="288681"/>
    <lineage>
        <taxon>Bacteria</taxon>
        <taxon>Bacillati</taxon>
        <taxon>Bacillota</taxon>
        <taxon>Bacilli</taxon>
        <taxon>Bacillales</taxon>
        <taxon>Bacillaceae</taxon>
        <taxon>Bacillus</taxon>
        <taxon>Bacillus cereus group</taxon>
    </lineage>
</organism>
<gene>
    <name evidence="1" type="primary">topB</name>
    <name type="ordered locus">BCE33L0347</name>
</gene>
<name>TOP3_BACCZ</name>
<dbReference type="EC" id="5.6.2.1" evidence="1"/>
<dbReference type="EMBL" id="CP000001">
    <property type="protein sequence ID" value="AAU19892.1"/>
    <property type="molecule type" value="Genomic_DNA"/>
</dbReference>
<dbReference type="RefSeq" id="WP_001140208.1">
    <property type="nucleotide sequence ID" value="NC_006274.1"/>
</dbReference>
<dbReference type="SMR" id="Q63GK5"/>
<dbReference type="KEGG" id="bcz:BCE33L0347"/>
<dbReference type="PATRIC" id="fig|288681.22.peg.5256"/>
<dbReference type="Proteomes" id="UP000002612">
    <property type="component" value="Chromosome"/>
</dbReference>
<dbReference type="GO" id="GO:0043597">
    <property type="term" value="C:cytoplasmic replication fork"/>
    <property type="evidence" value="ECO:0007669"/>
    <property type="project" value="TreeGrafter"/>
</dbReference>
<dbReference type="GO" id="GO:0003677">
    <property type="term" value="F:DNA binding"/>
    <property type="evidence" value="ECO:0007669"/>
    <property type="project" value="UniProtKB-KW"/>
</dbReference>
<dbReference type="GO" id="GO:0003917">
    <property type="term" value="F:DNA topoisomerase type I (single strand cut, ATP-independent) activity"/>
    <property type="evidence" value="ECO:0007669"/>
    <property type="project" value="UniProtKB-UniRule"/>
</dbReference>
<dbReference type="GO" id="GO:0000287">
    <property type="term" value="F:magnesium ion binding"/>
    <property type="evidence" value="ECO:0007669"/>
    <property type="project" value="UniProtKB-UniRule"/>
</dbReference>
<dbReference type="GO" id="GO:0006310">
    <property type="term" value="P:DNA recombination"/>
    <property type="evidence" value="ECO:0007669"/>
    <property type="project" value="TreeGrafter"/>
</dbReference>
<dbReference type="GO" id="GO:0006281">
    <property type="term" value="P:DNA repair"/>
    <property type="evidence" value="ECO:0007669"/>
    <property type="project" value="TreeGrafter"/>
</dbReference>
<dbReference type="GO" id="GO:0006265">
    <property type="term" value="P:DNA topological change"/>
    <property type="evidence" value="ECO:0007669"/>
    <property type="project" value="UniProtKB-UniRule"/>
</dbReference>
<dbReference type="CDD" id="cd00186">
    <property type="entry name" value="TOP1Ac"/>
    <property type="match status" value="1"/>
</dbReference>
<dbReference type="CDD" id="cd03362">
    <property type="entry name" value="TOPRIM_TopoIA_TopoIII"/>
    <property type="match status" value="1"/>
</dbReference>
<dbReference type="Gene3D" id="3.40.50.140">
    <property type="match status" value="1"/>
</dbReference>
<dbReference type="Gene3D" id="1.10.460.10">
    <property type="entry name" value="Topoisomerase I, domain 2"/>
    <property type="match status" value="1"/>
</dbReference>
<dbReference type="Gene3D" id="2.70.20.10">
    <property type="entry name" value="Topoisomerase I, domain 3"/>
    <property type="match status" value="1"/>
</dbReference>
<dbReference type="Gene3D" id="1.10.290.10">
    <property type="entry name" value="Topoisomerase I, domain 4"/>
    <property type="match status" value="1"/>
</dbReference>
<dbReference type="HAMAP" id="MF_00953">
    <property type="entry name" value="Topoisom_3_prok"/>
    <property type="match status" value="1"/>
</dbReference>
<dbReference type="InterPro" id="IPR000380">
    <property type="entry name" value="Topo_IA"/>
</dbReference>
<dbReference type="InterPro" id="IPR003601">
    <property type="entry name" value="Topo_IA_2"/>
</dbReference>
<dbReference type="InterPro" id="IPR023406">
    <property type="entry name" value="Topo_IA_AS"/>
</dbReference>
<dbReference type="InterPro" id="IPR013497">
    <property type="entry name" value="Topo_IA_cen"/>
</dbReference>
<dbReference type="InterPro" id="IPR013824">
    <property type="entry name" value="Topo_IA_cen_sub1"/>
</dbReference>
<dbReference type="InterPro" id="IPR013825">
    <property type="entry name" value="Topo_IA_cen_sub2"/>
</dbReference>
<dbReference type="InterPro" id="IPR013826">
    <property type="entry name" value="Topo_IA_cen_sub3"/>
</dbReference>
<dbReference type="InterPro" id="IPR023405">
    <property type="entry name" value="Topo_IA_core_domain"/>
</dbReference>
<dbReference type="InterPro" id="IPR003602">
    <property type="entry name" value="Topo_IA_DNA-bd_dom"/>
</dbReference>
<dbReference type="InterPro" id="IPR005738">
    <property type="entry name" value="TopoIII"/>
</dbReference>
<dbReference type="InterPro" id="IPR006171">
    <property type="entry name" value="TOPRIM_dom"/>
</dbReference>
<dbReference type="InterPro" id="IPR034144">
    <property type="entry name" value="TOPRIM_TopoIII"/>
</dbReference>
<dbReference type="NCBIfam" id="NF005829">
    <property type="entry name" value="PRK07726.1"/>
    <property type="match status" value="1"/>
</dbReference>
<dbReference type="NCBIfam" id="TIGR01056">
    <property type="entry name" value="topB"/>
    <property type="match status" value="1"/>
</dbReference>
<dbReference type="PANTHER" id="PTHR11390:SF21">
    <property type="entry name" value="DNA TOPOISOMERASE 3-ALPHA"/>
    <property type="match status" value="1"/>
</dbReference>
<dbReference type="PANTHER" id="PTHR11390">
    <property type="entry name" value="PROKARYOTIC DNA TOPOISOMERASE"/>
    <property type="match status" value="1"/>
</dbReference>
<dbReference type="Pfam" id="PF01131">
    <property type="entry name" value="Topoisom_bac"/>
    <property type="match status" value="1"/>
</dbReference>
<dbReference type="Pfam" id="PF01751">
    <property type="entry name" value="Toprim"/>
    <property type="match status" value="1"/>
</dbReference>
<dbReference type="PRINTS" id="PR00417">
    <property type="entry name" value="PRTPISMRASEI"/>
</dbReference>
<dbReference type="SMART" id="SM00437">
    <property type="entry name" value="TOP1Ac"/>
    <property type="match status" value="1"/>
</dbReference>
<dbReference type="SMART" id="SM00436">
    <property type="entry name" value="TOP1Bc"/>
    <property type="match status" value="1"/>
</dbReference>
<dbReference type="SMART" id="SM00493">
    <property type="entry name" value="TOPRIM"/>
    <property type="match status" value="1"/>
</dbReference>
<dbReference type="SUPFAM" id="SSF56712">
    <property type="entry name" value="Prokaryotic type I DNA topoisomerase"/>
    <property type="match status" value="1"/>
</dbReference>
<dbReference type="PROSITE" id="PS00396">
    <property type="entry name" value="TOPO_IA_1"/>
    <property type="match status" value="1"/>
</dbReference>
<dbReference type="PROSITE" id="PS52039">
    <property type="entry name" value="TOPO_IA_2"/>
    <property type="match status" value="1"/>
</dbReference>
<dbReference type="PROSITE" id="PS50880">
    <property type="entry name" value="TOPRIM"/>
    <property type="match status" value="1"/>
</dbReference>
<accession>Q63GK5</accession>
<keyword id="KW-0238">DNA-binding</keyword>
<keyword id="KW-0413">Isomerase</keyword>
<keyword id="KW-0460">Magnesium</keyword>
<keyword id="KW-0479">Metal-binding</keyword>
<keyword id="KW-0799">Topoisomerase</keyword>
<sequence>MAKSVVIAEKPSVARDIARVLKCDKKGNGYLEGSKYIVTWALGHLVTLADPESYDVKYKKWNLEDLPMLPERLKLTVIKQTGKQFNAVKSQLLRKDVNEIIVATDAGREGELVARWIIDKVRINKPIKRLWISSVTDKAIKDGFANLKPGKAYDNLYASAVARSEADWYIGLNATRALTTRFNAQLNCGRVQTPTVAMIANREDEIKNFKAQTYYGIEAQTTNQLKLTWQDANGNSRSFNKEKIDGIVKGLDKHNATVLEIDKKQKKSFSPGLYDLTELQRDANKKFGYSAKETLNIMQKLYEQHKVLTYPRTDSRYISSDIVGTLPERLKACGVGEYRPLAHKVLQKPIKANKSFVDDSKVSDHHAIIPTEGYVNFSAFTDKERKIYDLVVKRFLAVLFPAFEYEQLTLRTKIGNETFIARGKTILHAGWKEVYENRFEDDDVTDEVKEQLLPRIEKGDTLTVKLIMQTSGQTKAPARFNEATLLSAMENPTKYMDTQNKQLADTLKSTGGLGTVATRADIIDKLFNSFLIEKRGKDIHITSKGRQLLDLVPEELKSPTLTGEWEQKLEAIAKGKLKKEVFISEMKNYTKEIVSEIKSSDKKYKHDNISTKSCPDCGKPMLEVNGKKGKMLVCQDRECGHRKNVSRTTNARCPQCKKKLELRGEGAGQIFACKCGYREKLSTFQERRKKESGNKADKRDVQKYMKQQKKEEEPLNNPFAEALKKLKFD</sequence>
<proteinExistence type="inferred from homology"/>
<protein>
    <recommendedName>
        <fullName evidence="1">DNA topoisomerase 3</fullName>
        <ecNumber evidence="1">5.6.2.1</ecNumber>
    </recommendedName>
    <alternativeName>
        <fullName evidence="1">DNA topoisomerase III</fullName>
    </alternativeName>
</protein>
<reference key="1">
    <citation type="journal article" date="2006" name="J. Bacteriol.">
        <title>Pathogenomic sequence analysis of Bacillus cereus and Bacillus thuringiensis isolates closely related to Bacillus anthracis.</title>
        <authorList>
            <person name="Han C.S."/>
            <person name="Xie G."/>
            <person name="Challacombe J.F."/>
            <person name="Altherr M.R."/>
            <person name="Bhotika S.S."/>
            <person name="Bruce D."/>
            <person name="Campbell C.S."/>
            <person name="Campbell M.L."/>
            <person name="Chen J."/>
            <person name="Chertkov O."/>
            <person name="Cleland C."/>
            <person name="Dimitrijevic M."/>
            <person name="Doggett N.A."/>
            <person name="Fawcett J.J."/>
            <person name="Glavina T."/>
            <person name="Goodwin L.A."/>
            <person name="Hill K.K."/>
            <person name="Hitchcock P."/>
            <person name="Jackson P.J."/>
            <person name="Keim P."/>
            <person name="Kewalramani A.R."/>
            <person name="Longmire J."/>
            <person name="Lucas S."/>
            <person name="Malfatti S."/>
            <person name="McMurry K."/>
            <person name="Meincke L.J."/>
            <person name="Misra M."/>
            <person name="Moseman B.L."/>
            <person name="Mundt M."/>
            <person name="Munk A.C."/>
            <person name="Okinaka R.T."/>
            <person name="Parson-Quintana B."/>
            <person name="Reilly L.P."/>
            <person name="Richardson P."/>
            <person name="Robinson D.L."/>
            <person name="Rubin E."/>
            <person name="Saunders E."/>
            <person name="Tapia R."/>
            <person name="Tesmer J.G."/>
            <person name="Thayer N."/>
            <person name="Thompson L.S."/>
            <person name="Tice H."/>
            <person name="Ticknor L.O."/>
            <person name="Wills P.L."/>
            <person name="Brettin T.S."/>
            <person name="Gilna P."/>
        </authorList>
    </citation>
    <scope>NUCLEOTIDE SEQUENCE [LARGE SCALE GENOMIC DNA]</scope>
    <source>
        <strain>ZK / E33L</strain>
    </source>
</reference>
<evidence type="ECO:0000255" key="1">
    <source>
        <dbReference type="HAMAP-Rule" id="MF_00953"/>
    </source>
</evidence>
<evidence type="ECO:0000255" key="2">
    <source>
        <dbReference type="PROSITE-ProRule" id="PRU01383"/>
    </source>
</evidence>
<evidence type="ECO:0000256" key="3">
    <source>
        <dbReference type="SAM" id="MobiDB-lite"/>
    </source>
</evidence>
<comment type="function">
    <text evidence="1">Releases the supercoiling and torsional tension of DNA, which is introduced during the DNA replication and transcription, by transiently cleaving and rejoining one strand of the DNA duplex. Introduces a single-strand break via transesterification at a target site in duplex DNA. The scissile phosphodiester is attacked by the catalytic tyrosine of the enzyme, resulting in the formation of a DNA-(5'-phosphotyrosyl)-enzyme intermediate and the expulsion of a 3'-OH DNA strand. The free DNA strand then undergoes passage around the unbroken strand, thus removing DNA supercoils. Finally, in the religation step, the DNA 3'-OH attacks the covalent intermediate to expel the active-site tyrosine and restore the DNA phosphodiester backbone.</text>
</comment>
<comment type="catalytic activity">
    <reaction evidence="1">
        <text>ATP-independent breakage of single-stranded DNA, followed by passage and rejoining.</text>
        <dbReference type="EC" id="5.6.2.1"/>
    </reaction>
</comment>
<comment type="cofactor">
    <cofactor evidence="1">
        <name>Mg(2+)</name>
        <dbReference type="ChEBI" id="CHEBI:18420"/>
    </cofactor>
</comment>
<comment type="similarity">
    <text evidence="1 2">Belongs to the type IA topoisomerase family.</text>
</comment>